<accession>Q3YUW0</accession>
<sequence>MKNINPTQTAAWQALQKHFDEMKDVTIADLFAKDGDRFSKFSATFDDQMLVDYSKNRITEETLAKLQDLAKECDLAGAIKSMFSGEKINRTENRAVLHVALRNRSNTPILVDGKDVMPEVNAVLEKMKTFSEAIISGEWKGYTGKAITDVVNIGIGGSDLGPYMVTEALRPYKNHLNMHFVSNVDGTHIAEVLKKVNPETTLFLVASKTFTTQETMTNAHSARDWFLKAAGDEKHVAKHFAALSTNAKAVGEFGIDTANMFEFWDWVGGRYSLWSAIGLSIVLSIGFDNFVELLSGAHAMDKHFSTTPAEKNLPVLLALIGIWYNNFFGAETEAILPYDQYMHRFAAYFQQGNMESNGKYVDRNGNVVDYQTGPIIWGEPGTNGQHAFYQLIHQGTKMVPCDFIAPAITHNPLSDHHQKLLSNFFAQTEALAFGKSREVVEQEYRDQGKDPATLDYVVPFKVFEGNRPTNSILLREITPFSLGALIALYEHKIFTQGVILNIFTFDQWGVELGKQLANRILPELKDDKEISSHDSSTNGLINRYKAWRG</sequence>
<feature type="chain" id="PRO_0000230935" description="Glucose-6-phosphate isomerase">
    <location>
        <begin position="1"/>
        <end position="549"/>
    </location>
</feature>
<feature type="active site" description="Proton donor" evidence="1">
    <location>
        <position position="355"/>
    </location>
</feature>
<feature type="active site" evidence="1">
    <location>
        <position position="386"/>
    </location>
</feature>
<feature type="active site" evidence="1">
    <location>
        <position position="514"/>
    </location>
</feature>
<feature type="modified residue" description="N6-acetyllysine" evidence="1">
    <location>
        <position position="80"/>
    </location>
</feature>
<feature type="modified residue" description="N6-acetyllysine" evidence="1">
    <location>
        <position position="228"/>
    </location>
</feature>
<feature type="modified residue" description="N6-acetyllysine" evidence="1">
    <location>
        <position position="234"/>
    </location>
</feature>
<keyword id="KW-0007">Acetylation</keyword>
<keyword id="KW-0963">Cytoplasm</keyword>
<keyword id="KW-0312">Gluconeogenesis</keyword>
<keyword id="KW-0324">Glycolysis</keyword>
<keyword id="KW-0413">Isomerase</keyword>
<keyword id="KW-1185">Reference proteome</keyword>
<protein>
    <recommendedName>
        <fullName evidence="1">Glucose-6-phosphate isomerase</fullName>
        <shortName evidence="1">GPI</shortName>
        <ecNumber evidence="1">5.3.1.9</ecNumber>
    </recommendedName>
    <alternativeName>
        <fullName evidence="1">Phosphoglucose isomerase</fullName>
        <shortName evidence="1">PGI</shortName>
    </alternativeName>
    <alternativeName>
        <fullName evidence="1">Phosphohexose isomerase</fullName>
        <shortName evidence="1">PHI</shortName>
    </alternativeName>
</protein>
<evidence type="ECO:0000255" key="1">
    <source>
        <dbReference type="HAMAP-Rule" id="MF_00473"/>
    </source>
</evidence>
<dbReference type="EC" id="5.3.1.9" evidence="1"/>
<dbReference type="EMBL" id="CP000038">
    <property type="protein sequence ID" value="AAZ90702.1"/>
    <property type="molecule type" value="Genomic_DNA"/>
</dbReference>
<dbReference type="RefSeq" id="WP_000789986.1">
    <property type="nucleotide sequence ID" value="NC_007384.1"/>
</dbReference>
<dbReference type="SMR" id="Q3YUW0"/>
<dbReference type="GeneID" id="93777863"/>
<dbReference type="KEGG" id="ssn:SSON_4203"/>
<dbReference type="HOGENOM" id="CLU_017947_3_1_6"/>
<dbReference type="UniPathway" id="UPA00109">
    <property type="reaction ID" value="UER00181"/>
</dbReference>
<dbReference type="UniPathway" id="UPA00138"/>
<dbReference type="Proteomes" id="UP000002529">
    <property type="component" value="Chromosome"/>
</dbReference>
<dbReference type="GO" id="GO:0005829">
    <property type="term" value="C:cytosol"/>
    <property type="evidence" value="ECO:0007669"/>
    <property type="project" value="TreeGrafter"/>
</dbReference>
<dbReference type="GO" id="GO:0097367">
    <property type="term" value="F:carbohydrate derivative binding"/>
    <property type="evidence" value="ECO:0007669"/>
    <property type="project" value="InterPro"/>
</dbReference>
<dbReference type="GO" id="GO:0004347">
    <property type="term" value="F:glucose-6-phosphate isomerase activity"/>
    <property type="evidence" value="ECO:0007669"/>
    <property type="project" value="UniProtKB-UniRule"/>
</dbReference>
<dbReference type="GO" id="GO:0048029">
    <property type="term" value="F:monosaccharide binding"/>
    <property type="evidence" value="ECO:0007669"/>
    <property type="project" value="TreeGrafter"/>
</dbReference>
<dbReference type="GO" id="GO:0006094">
    <property type="term" value="P:gluconeogenesis"/>
    <property type="evidence" value="ECO:0007669"/>
    <property type="project" value="UniProtKB-UniRule"/>
</dbReference>
<dbReference type="GO" id="GO:0051156">
    <property type="term" value="P:glucose 6-phosphate metabolic process"/>
    <property type="evidence" value="ECO:0007669"/>
    <property type="project" value="TreeGrafter"/>
</dbReference>
<dbReference type="GO" id="GO:0006096">
    <property type="term" value="P:glycolytic process"/>
    <property type="evidence" value="ECO:0007669"/>
    <property type="project" value="UniProtKB-UniRule"/>
</dbReference>
<dbReference type="CDD" id="cd05015">
    <property type="entry name" value="SIS_PGI_1"/>
    <property type="match status" value="1"/>
</dbReference>
<dbReference type="CDD" id="cd05016">
    <property type="entry name" value="SIS_PGI_2"/>
    <property type="match status" value="1"/>
</dbReference>
<dbReference type="FunFam" id="1.10.1390.10:FF:000001">
    <property type="entry name" value="Glucose-6-phosphate isomerase"/>
    <property type="match status" value="1"/>
</dbReference>
<dbReference type="FunFam" id="3.40.50.10490:FF:000004">
    <property type="entry name" value="Glucose-6-phosphate isomerase"/>
    <property type="match status" value="1"/>
</dbReference>
<dbReference type="Gene3D" id="1.10.1390.10">
    <property type="match status" value="1"/>
</dbReference>
<dbReference type="Gene3D" id="3.40.50.10490">
    <property type="entry name" value="Glucose-6-phosphate isomerase like protein, domain 1"/>
    <property type="match status" value="2"/>
</dbReference>
<dbReference type="HAMAP" id="MF_00473">
    <property type="entry name" value="G6P_isomerase"/>
    <property type="match status" value="1"/>
</dbReference>
<dbReference type="InterPro" id="IPR001672">
    <property type="entry name" value="G6P_Isomerase"/>
</dbReference>
<dbReference type="InterPro" id="IPR023096">
    <property type="entry name" value="G6P_Isomerase_C"/>
</dbReference>
<dbReference type="InterPro" id="IPR018189">
    <property type="entry name" value="Phosphoglucose_isomerase_CS"/>
</dbReference>
<dbReference type="InterPro" id="IPR046348">
    <property type="entry name" value="SIS_dom_sf"/>
</dbReference>
<dbReference type="InterPro" id="IPR035476">
    <property type="entry name" value="SIS_PGI_1"/>
</dbReference>
<dbReference type="InterPro" id="IPR035482">
    <property type="entry name" value="SIS_PGI_2"/>
</dbReference>
<dbReference type="NCBIfam" id="NF001211">
    <property type="entry name" value="PRK00179.1"/>
    <property type="match status" value="1"/>
</dbReference>
<dbReference type="PANTHER" id="PTHR11469">
    <property type="entry name" value="GLUCOSE-6-PHOSPHATE ISOMERASE"/>
    <property type="match status" value="1"/>
</dbReference>
<dbReference type="PANTHER" id="PTHR11469:SF1">
    <property type="entry name" value="GLUCOSE-6-PHOSPHATE ISOMERASE"/>
    <property type="match status" value="1"/>
</dbReference>
<dbReference type="Pfam" id="PF00342">
    <property type="entry name" value="PGI"/>
    <property type="match status" value="1"/>
</dbReference>
<dbReference type="PRINTS" id="PR00662">
    <property type="entry name" value="G6PISOMERASE"/>
</dbReference>
<dbReference type="SUPFAM" id="SSF53697">
    <property type="entry name" value="SIS domain"/>
    <property type="match status" value="1"/>
</dbReference>
<dbReference type="PROSITE" id="PS00765">
    <property type="entry name" value="P_GLUCOSE_ISOMERASE_1"/>
    <property type="match status" value="1"/>
</dbReference>
<dbReference type="PROSITE" id="PS00174">
    <property type="entry name" value="P_GLUCOSE_ISOMERASE_2"/>
    <property type="match status" value="1"/>
</dbReference>
<dbReference type="PROSITE" id="PS51463">
    <property type="entry name" value="P_GLUCOSE_ISOMERASE_3"/>
    <property type="match status" value="1"/>
</dbReference>
<name>G6PI_SHISS</name>
<comment type="function">
    <text evidence="1">Catalyzes the reversible isomerization of glucose-6-phosphate to fructose-6-phosphate.</text>
</comment>
<comment type="catalytic activity">
    <reaction evidence="1">
        <text>alpha-D-glucose 6-phosphate = beta-D-fructose 6-phosphate</text>
        <dbReference type="Rhea" id="RHEA:11816"/>
        <dbReference type="ChEBI" id="CHEBI:57634"/>
        <dbReference type="ChEBI" id="CHEBI:58225"/>
        <dbReference type="EC" id="5.3.1.9"/>
    </reaction>
</comment>
<comment type="pathway">
    <text evidence="1">Carbohydrate biosynthesis; gluconeogenesis.</text>
</comment>
<comment type="pathway">
    <text evidence="1">Carbohydrate degradation; glycolysis; D-glyceraldehyde 3-phosphate and glycerone phosphate from D-glucose: step 2/4.</text>
</comment>
<comment type="subcellular location">
    <subcellularLocation>
        <location evidence="1">Cytoplasm</location>
    </subcellularLocation>
</comment>
<comment type="similarity">
    <text evidence="1">Belongs to the GPI family.</text>
</comment>
<organism>
    <name type="scientific">Shigella sonnei (strain Ss046)</name>
    <dbReference type="NCBI Taxonomy" id="300269"/>
    <lineage>
        <taxon>Bacteria</taxon>
        <taxon>Pseudomonadati</taxon>
        <taxon>Pseudomonadota</taxon>
        <taxon>Gammaproteobacteria</taxon>
        <taxon>Enterobacterales</taxon>
        <taxon>Enterobacteriaceae</taxon>
        <taxon>Shigella</taxon>
    </lineage>
</organism>
<reference key="1">
    <citation type="journal article" date="2005" name="Nucleic Acids Res.">
        <title>Genome dynamics and diversity of Shigella species, the etiologic agents of bacillary dysentery.</title>
        <authorList>
            <person name="Yang F."/>
            <person name="Yang J."/>
            <person name="Zhang X."/>
            <person name="Chen L."/>
            <person name="Jiang Y."/>
            <person name="Yan Y."/>
            <person name="Tang X."/>
            <person name="Wang J."/>
            <person name="Xiong Z."/>
            <person name="Dong J."/>
            <person name="Xue Y."/>
            <person name="Zhu Y."/>
            <person name="Xu X."/>
            <person name="Sun L."/>
            <person name="Chen S."/>
            <person name="Nie H."/>
            <person name="Peng J."/>
            <person name="Xu J."/>
            <person name="Wang Y."/>
            <person name="Yuan Z."/>
            <person name="Wen Y."/>
            <person name="Yao Z."/>
            <person name="Shen Y."/>
            <person name="Qiang B."/>
            <person name="Hou Y."/>
            <person name="Yu J."/>
            <person name="Jin Q."/>
        </authorList>
    </citation>
    <scope>NUCLEOTIDE SEQUENCE [LARGE SCALE GENOMIC DNA]</scope>
    <source>
        <strain>Ss046</strain>
    </source>
</reference>
<proteinExistence type="inferred from homology"/>
<gene>
    <name evidence="1" type="primary">pgi</name>
    <name type="ordered locus">SSON_4203</name>
</gene>